<organism>
    <name type="scientific">Arthrobacter sp</name>
    <dbReference type="NCBI Taxonomy" id="1667"/>
    <lineage>
        <taxon>Bacteria</taxon>
        <taxon>Bacillati</taxon>
        <taxon>Actinomycetota</taxon>
        <taxon>Actinomycetes</taxon>
        <taxon>Micrococcales</taxon>
        <taxon>Micrococcaceae</taxon>
        <taxon>Arthrobacter</taxon>
    </lineage>
</organism>
<evidence type="ECO:0000250" key="1"/>
<evidence type="ECO:0000250" key="2">
    <source>
        <dbReference type="UniProtKB" id="A5JTM5"/>
    </source>
</evidence>
<evidence type="ECO:0000255" key="3"/>
<evidence type="ECO:0000269" key="4">
    <source>
    </source>
</evidence>
<evidence type="ECO:0000269" key="5">
    <source>
    </source>
</evidence>
<evidence type="ECO:0000269" key="6">
    <source>
    </source>
</evidence>
<evidence type="ECO:0000303" key="7">
    <source>
    </source>
</evidence>
<evidence type="ECO:0000305" key="8"/>
<evidence type="ECO:0000312" key="9">
    <source>
        <dbReference type="EMBL" id="AAF78820.1"/>
    </source>
</evidence>
<keyword id="KW-0903">Direct protein sequencing</keyword>
<keyword id="KW-0378">Hydrolase</keyword>
<dbReference type="EC" id="3.8.1.7"/>
<dbReference type="EMBL" id="AF042490">
    <property type="protein sequence ID" value="AAF78820.1"/>
    <property type="molecule type" value="Genomic_DNA"/>
</dbReference>
<dbReference type="SMR" id="Q9LCU3"/>
<dbReference type="UniPathway" id="UPA01011">
    <property type="reaction ID" value="UER01021"/>
</dbReference>
<dbReference type="GO" id="GO:0018787">
    <property type="term" value="F:4-chlorobenzoyl-CoA dehalogenase activity"/>
    <property type="evidence" value="ECO:0000314"/>
    <property type="project" value="UniProtKB"/>
</dbReference>
<dbReference type="GO" id="GO:0015936">
    <property type="term" value="P:coenzyme A metabolic process"/>
    <property type="evidence" value="ECO:0000314"/>
    <property type="project" value="UniProtKB"/>
</dbReference>
<dbReference type="CDD" id="cd06558">
    <property type="entry name" value="crotonase-like"/>
    <property type="match status" value="1"/>
</dbReference>
<dbReference type="FunFam" id="1.10.12.10:FF:000028">
    <property type="entry name" value="4-chlorobenzoyl coenzyme A dehalogenase"/>
    <property type="match status" value="1"/>
</dbReference>
<dbReference type="Gene3D" id="3.90.226.10">
    <property type="entry name" value="2-enoyl-CoA Hydratase, Chain A, domain 1"/>
    <property type="match status" value="1"/>
</dbReference>
<dbReference type="Gene3D" id="1.10.12.10">
    <property type="entry name" value="Lyase 2-enoyl-coa Hydratase, Chain A, domain 2"/>
    <property type="match status" value="1"/>
</dbReference>
<dbReference type="InterPro" id="IPR029045">
    <property type="entry name" value="ClpP/crotonase-like_dom_sf"/>
</dbReference>
<dbReference type="InterPro" id="IPR051053">
    <property type="entry name" value="ECH/Chromodomain_protein"/>
</dbReference>
<dbReference type="InterPro" id="IPR018376">
    <property type="entry name" value="Enoyl-CoA_hyd/isom_CS"/>
</dbReference>
<dbReference type="InterPro" id="IPR001753">
    <property type="entry name" value="Enoyl-CoA_hydra/iso"/>
</dbReference>
<dbReference type="InterPro" id="IPR014748">
    <property type="entry name" value="Enoyl-CoA_hydra_C"/>
</dbReference>
<dbReference type="PANTHER" id="PTHR43684">
    <property type="match status" value="1"/>
</dbReference>
<dbReference type="PANTHER" id="PTHR43684:SF4">
    <property type="entry name" value="ENOYL-COA HYDRATASE_ISOMERASE FAMILY PROTEIN (AFU_ORTHOLOGUE AFUA_1G01890)"/>
    <property type="match status" value="1"/>
</dbReference>
<dbReference type="Pfam" id="PF00378">
    <property type="entry name" value="ECH_1"/>
    <property type="match status" value="1"/>
</dbReference>
<dbReference type="SUPFAM" id="SSF52096">
    <property type="entry name" value="ClpP/crotonase"/>
    <property type="match status" value="1"/>
</dbReference>
<dbReference type="PROSITE" id="PS00166">
    <property type="entry name" value="ENOYL_COA_HYDRATASE"/>
    <property type="match status" value="1"/>
</dbReference>
<reference evidence="9" key="1">
    <citation type="journal article" date="2001" name="J. Bacteriol.">
        <title>Isolation and characterization of IS1409, an insertion element of 4-chlorobenzoate-degrading Arthrobacter sp. strain TM1, and development of a system for transposon mutagenesis.</title>
        <authorList>
            <person name="Gartemann K.H."/>
            <person name="Eichenlaub R."/>
        </authorList>
    </citation>
    <scope>NUCLEOTIDE SEQUENCE [GENOMIC DNA]</scope>
    <source>
        <strain evidence="9">NCIB 12013 / TM1</strain>
    </source>
</reference>
<reference evidence="8" key="2">
    <citation type="journal article" date="1994" name="Biochemistry">
        <title>Purification and characterization of 4-chlorobenzoyl CoA dehalogenase from Arthrobacter sp. strain 4-CB1.</title>
        <authorList>
            <person name="Crooks G.P."/>
            <person name="Copley S.D."/>
        </authorList>
    </citation>
    <scope>PROTEIN SEQUENCE OF 2-25</scope>
    <scope>FUNCTION</scope>
    <scope>CATALYTIC ACTIVITY</scope>
    <scope>BIOPHYSICOCHEMICAL PROPERTIES</scope>
    <scope>SUBUNIT</scope>
    <source>
        <strain evidence="6">4-CB1</strain>
    </source>
</reference>
<reference evidence="8" key="3">
    <citation type="journal article" date="2004" name="Biodegradation">
        <title>The purification and characterisation of 4-chlorobenzoate:CoA ligase and 4-chlorobenzoyl CoA dehalogenase from Arthrobacter sp. strain TM-1.</title>
        <authorList>
            <person name="Zhou L."/>
            <person name="Marks T.S."/>
            <person name="Poh R.P."/>
            <person name="Smith R.J."/>
            <person name="Chowdhry B.Z."/>
            <person name="Smith A.R."/>
        </authorList>
    </citation>
    <scope>PROTEIN SEQUENCE OF 2-21</scope>
    <scope>CATALYTIC ACTIVITY</scope>
    <scope>BIOPHYSICOCHEMICAL PROPERTIES</scope>
    <scope>SUBUNIT</scope>
    <source>
        <strain evidence="4">NCIB 12013 / TM1</strain>
    </source>
</reference>
<reference evidence="8" key="4">
    <citation type="journal article" date="2008" name="Biodegradation">
        <title>Structure and denaturation of 4-chlorobenzoyl coenzyme A dehalogenase from Arthrobacter sp. strain TM-1.</title>
        <authorList>
            <person name="Zhou L."/>
            <person name="Poh R.P."/>
            <person name="Marks T.S."/>
            <person name="Chowdhry B.Z."/>
            <person name="Smith A.R."/>
        </authorList>
    </citation>
    <scope>BIOPHYSICOCHEMICAL PROPERTIES</scope>
    <source>
        <strain evidence="5">NCIB 12013 / TM1</strain>
    </source>
</reference>
<accession>Q9LCU3</accession>
<comment type="function">
    <text evidence="6">Dehalogenates 4-chlorobenzoyl-CoA, 4-iodobenzoyl-CoA, 4-bromobenzoyl-CoA and, at a slower rate, 4-fluorobenzoyl-CoA. Does not dehalogenate 2-chlorobenzoyl-CoA or 3-chlorobenzoyl-CoA.</text>
</comment>
<comment type="catalytic activity">
    <reaction evidence="4 6">
        <text>4-chlorobenzoyl-CoA + H2O = 4-hydroxybenzoyl-CoA + chloride + H(+)</text>
        <dbReference type="Rhea" id="RHEA:14853"/>
        <dbReference type="ChEBI" id="CHEBI:15377"/>
        <dbReference type="ChEBI" id="CHEBI:15378"/>
        <dbReference type="ChEBI" id="CHEBI:17996"/>
        <dbReference type="ChEBI" id="CHEBI:57354"/>
        <dbReference type="ChEBI" id="CHEBI:57356"/>
        <dbReference type="EC" id="3.8.1.7"/>
    </reaction>
</comment>
<comment type="biophysicochemical properties">
    <kinetics>
        <KM evidence="4 5 6">14 uM for 4-iodobenzoyl-CoA (at 30 degrees Celsius, in 20 mM phosphate buffer, pH 7.2)</KM>
        <KM evidence="4 5 6">36 uM for 4-bromobenzoyl-CoA (at 30 degrees Celsius, in 20 mM phosphate buffer, pH 7.2)</KM>
        <KM evidence="4 5 6">34 uM for 4-chlorobenzoyl-CoA (at 30 degrees Celsius, in 20 mM phosphate buffer, pH 7.2)</KM>
        <KM evidence="4 5 6">75 uM for 4-fluorobenzoyl-CoA (at 30 degrees Celsius, in 20 mM phosphate buffer, pH 7.2)</KM>
        <KM evidence="4 5 6">9 uM for 4-chlorobenzoyl-CoA (at 30 degrees Celsius, in 50 mM phosphate buffer, pH 7.5)</KM>
    </kinetics>
    <phDependence>
        <text evidence="4 5 6">Optimum pH is 8.0 in MOPS buffer at 30 degrees Celsius, 7.5 in 0.1 M potassium phosphate buffer at 30 degrees Celsius, and 7.4 in 20 mM potassium phosphate/2 mM DTT buffer at 30 degrees Celsius. Retains full activity in MOPS buffer between pH 6.5 and 10.0. Is irreversibly damaged below pH 6.5 in MOPS buffer, enzyme treated at pH 6.0 in MOPS buffer only regains 40% of its original activity after re-equilibration at pH 7.2. When treated at pH 5.2 or 10.1 in 20 mM potassium phosphate/2 mM DTT buffer activity is lost completely, but is recovered within 17 minutes following readjustment to pH 7.4.</text>
    </phDependence>
    <temperatureDependence>
        <text evidence="4 5 6">Optimum temperature is 45 degrees Celsius. Activity is lost after 5 minutes incubation at 60 degrees Celsius, but one-fifth of this activity is restored after cooling to 45 degrees Celsius.</text>
    </temperatureDependence>
</comment>
<comment type="pathway">
    <text evidence="2">Xenobiotic degradation; 4-chlorobenzoate degradation; 4-hydroxybenzoate from 4-chlorobenzoate: step 2/3.</text>
</comment>
<comment type="subunit">
    <text evidence="4 6">Homotetramer.</text>
</comment>
<comment type="similarity">
    <text evidence="3">Belongs to the enoyl-CoA hydratase/isomerase family.</text>
</comment>
<feature type="initiator methionine" description="Removed" evidence="4 6">
    <location>
        <position position="1"/>
    </location>
</feature>
<feature type="chain" id="PRO_0000401146" description="4-chlorobenzoyl coenzyme A dehalogenase-2" evidence="4 6">
    <location>
        <begin position="2"/>
        <end position="276"/>
    </location>
</feature>
<feature type="active site" description="Proton acceptor" evidence="2">
    <location>
        <position position="93"/>
    </location>
</feature>
<feature type="active site" description="Nucleophile" evidence="2">
    <location>
        <position position="148"/>
    </location>
</feature>
<feature type="binding site" description="in other chain" evidence="1">
    <location>
        <begin position="66"/>
        <end position="71"/>
    </location>
    <ligand>
        <name>substrate</name>
        <note>ligand shared between two oligomeric partners</note>
    </ligand>
</feature>
<feature type="binding site" description="in other chain" evidence="1">
    <location>
        <position position="117"/>
    </location>
    <ligand>
        <name>substrate</name>
        <note>ligand shared between two oligomeric partners</note>
    </ligand>
</feature>
<feature type="binding site" evidence="1">
    <location>
        <position position="261"/>
    </location>
    <ligand>
        <name>substrate</name>
        <note>ligand shared between two oligomeric partners</note>
    </ligand>
</feature>
<proteinExistence type="evidence at protein level"/>
<sequence>MSSNSDHHISVEHTDGVATIRFTRPSKHNAASAQLLLETLEALYRLESDDSVGAIVLTGEGAVFSAGFDLEEVPMGPASEIQSHFRLKALYYHAVIHMLARIEKPTLAAINGPAVGGGLGMSLACDLAVCTDRATFLPAWMSIGIANDASSSFYLPRIVGYRRAMEWLLTNRTLGADEAYEWGVVNRVFSEADFQSRVGEIARQLAAAPTHLQGLVKNRIQEGSSETLESCTEHEVQNVIASVGHPHFAERLAMFRSKEMRSSALAVDLDAVCGGR</sequence>
<name>CBAD2_ARTSP</name>
<protein>
    <recommendedName>
        <fullName>4-chlorobenzoyl coenzyme A dehalogenase-2</fullName>
        <shortName>4-CBA-CoA dehalogenase-2</shortName>
        <shortName evidence="7">4-CBCoA dehalogenase-2</shortName>
        <shortName>4-chlorobenzoyl-CoA dehalogenase-2</shortName>
        <ecNumber>3.8.1.7</ecNumber>
    </recommendedName>
</protein>
<gene>
    <name evidence="9" type="primary">fcbB2</name>
</gene>